<feature type="chain" id="PRO_0000096827" description="Protein NifX">
    <location>
        <begin position="1"/>
        <end position="158"/>
    </location>
</feature>
<reference key="1">
    <citation type="journal article" date="1989" name="J. Bacteriol.">
        <title>Physical and genetic map of the major nif gene cluster from Azotobacter vinelandii.</title>
        <authorList>
            <person name="Jacobson M.R."/>
            <person name="Brigle K.E."/>
            <person name="Bennett L.T."/>
            <person name="Setterquist R.A."/>
            <person name="Wilson M.S."/>
            <person name="Cash V.L."/>
            <person name="Beynon J."/>
            <person name="Newton W.E."/>
            <person name="Dean D.R."/>
        </authorList>
    </citation>
    <scope>NUCLEOTIDE SEQUENCE [GENOMIC DNA]</scope>
    <source>
        <strain>ATCC 13705 / OP1 / DSM 366 / NCIMB 11614 / LMG 3878 / UW</strain>
    </source>
</reference>
<sequence>MSSPTRQLQVLDSEDDGTLLKVAFASSDRELVDQHFGSSRSFAIYGVNPERSQLLSVVEFGELEQDGNEDKLARKIDLLDGCVAVYCCACGASAVRQLMAIGVQPIKVSEGARIAELIEALQVELREGPSAWLAKAIQRTRGPDMRRFDAMAAEGWDE</sequence>
<proteinExistence type="inferred from homology"/>
<protein>
    <recommendedName>
        <fullName>Protein NifX</fullName>
    </recommendedName>
</protein>
<name>NIFX_AZOVI</name>
<comment type="similarity">
    <text evidence="1">Belongs to the NifX/NifY family.</text>
</comment>
<accession>P14887</accession>
<evidence type="ECO:0000305" key="1"/>
<gene>
    <name type="primary">nifX</name>
</gene>
<dbReference type="EMBL" id="M20568">
    <property type="protein sequence ID" value="AAA64718.1"/>
    <property type="molecule type" value="Genomic_DNA"/>
</dbReference>
<dbReference type="PIR" id="C32055">
    <property type="entry name" value="C32055"/>
</dbReference>
<dbReference type="RefSeq" id="WP_012698840.1">
    <property type="nucleotide sequence ID" value="NZ_FPKM01000020.1"/>
</dbReference>
<dbReference type="SMR" id="P14887"/>
<dbReference type="OMA" id="MQIGGPA"/>
<dbReference type="GO" id="GO:0009399">
    <property type="term" value="P:nitrogen fixation"/>
    <property type="evidence" value="ECO:0007669"/>
    <property type="project" value="UniProtKB-KW"/>
</dbReference>
<dbReference type="CDD" id="cd00853">
    <property type="entry name" value="NifX"/>
    <property type="match status" value="1"/>
</dbReference>
<dbReference type="Gene3D" id="3.30.420.130">
    <property type="entry name" value="Dinitrogenase iron-molybdenum cofactor biosynthesis domain"/>
    <property type="match status" value="1"/>
</dbReference>
<dbReference type="InterPro" id="IPR003731">
    <property type="entry name" value="Di-Nase_FeMo-co_biosynth"/>
</dbReference>
<dbReference type="InterPro" id="IPR036105">
    <property type="entry name" value="DiNase_FeMo-co_biosyn_sf"/>
</dbReference>
<dbReference type="InterPro" id="IPR034169">
    <property type="entry name" value="NifX-like"/>
</dbReference>
<dbReference type="InterPro" id="IPR051840">
    <property type="entry name" value="NifX/NifY_domain"/>
</dbReference>
<dbReference type="PANTHER" id="PTHR33937:SF1">
    <property type="entry name" value="IRON-MOLIBDENUM COFACTOR PROCESSING PROTEIN"/>
    <property type="match status" value="1"/>
</dbReference>
<dbReference type="PANTHER" id="PTHR33937">
    <property type="entry name" value="IRON-MOLYBDENUM PROTEIN-RELATED-RELATED"/>
    <property type="match status" value="1"/>
</dbReference>
<dbReference type="Pfam" id="PF02579">
    <property type="entry name" value="Nitro_FeMo-Co"/>
    <property type="match status" value="1"/>
</dbReference>
<dbReference type="SUPFAM" id="SSF53146">
    <property type="entry name" value="Nitrogenase accessory factor-like"/>
    <property type="match status" value="1"/>
</dbReference>
<keyword id="KW-0535">Nitrogen fixation</keyword>
<organism>
    <name type="scientific">Azotobacter vinelandii</name>
    <dbReference type="NCBI Taxonomy" id="354"/>
    <lineage>
        <taxon>Bacteria</taxon>
        <taxon>Pseudomonadati</taxon>
        <taxon>Pseudomonadota</taxon>
        <taxon>Gammaproteobacteria</taxon>
        <taxon>Pseudomonadales</taxon>
        <taxon>Pseudomonadaceae</taxon>
        <taxon>Azotobacter</taxon>
    </lineage>
</organism>